<comment type="function">
    <text evidence="5 7 8 13">NADH-dependent oxidoreductase which catalyzes the oxidation of all-trans-retinol to all-trans-retinal (PubMed:21995425). Plays a role in the regulation of cardiac and skeletal muscle metabolic functions (Probable) (PubMed:21995425, PubMed:27806939, PubMed:29330505). Maintains Ca(2+) intracellular homeostasis by repressing Ca(2+) release from the sarcoplasmic reticulum (SR) in myotubes, possibly through local alternations in NAD/NADH or retinol/retinal (PubMed:21995425). Also plays a role in Ca(2+) homeostasis by controlling Ca(2+) overload in the cytosol and the SR in myotubes (PubMed:27806939). Involved in glucose uptake into skeletal muscles and muscle performance by activating PI3K and mTORC2-mediated AKT1 phosphorylation signaling pathways, possibly through the action of its downstream catalytic product all-trans-retinoic acid (PubMed:29330505).</text>
</comment>
<comment type="catalytic activity">
    <reaction evidence="5">
        <text>all-trans-retinol + NAD(+) = all-trans-retinal + NADH + H(+)</text>
        <dbReference type="Rhea" id="RHEA:21284"/>
        <dbReference type="ChEBI" id="CHEBI:15378"/>
        <dbReference type="ChEBI" id="CHEBI:17336"/>
        <dbReference type="ChEBI" id="CHEBI:17898"/>
        <dbReference type="ChEBI" id="CHEBI:57540"/>
        <dbReference type="ChEBI" id="CHEBI:57945"/>
        <dbReference type="EC" id="1.1.1.105"/>
    </reaction>
    <physiologicalReaction direction="left-to-right" evidence="12">
        <dbReference type="Rhea" id="RHEA:21285"/>
    </physiologicalReaction>
</comment>
<comment type="subcellular location">
    <subcellularLocation>
        <location evidence="12 13 14">Sarcoplasmic reticulum membrane</location>
    </subcellularLocation>
    <text evidence="5 12">The N-terminus region encompasses a short hydrophobic sequence bound to the sarcoplasmic reticulum membrane, whereas the C-terminus catalytic domain faces the myoplasm. In skeletal muscle, enriched in the longitudinal sarcoplasmic reticulum (PubMed:21995425).</text>
</comment>
<comment type="tissue specificity">
    <text evidence="5 6 7">Expressed in skeletal muscle and cardiac muscle (PubMed:21995425, PubMed:22143674, PubMed:27806939). Also expressed in liver, kidney, adipocytes and skin (PubMed:21995425, PubMed:22143674).</text>
</comment>
<comment type="developmental stage">
    <text evidence="7">In skeletal muscle, expressed in differentiated myotubes but not in undifferentiated myoblasts.</text>
</comment>
<comment type="induction">
    <text evidence="5">Induced by all-trans-retinoic acid (at transcriptional level).</text>
</comment>
<comment type="domain">
    <text evidence="12">The N-terminus region encompasses a short hydrophobic sequence bound to the sarcoplasmic reticulum membrane, whereas the C-terminus catalytic domain faces the myoplasm.</text>
</comment>
<comment type="similarity">
    <text evidence="11">Belongs to the short-chain dehydrogenases/reductases (SDR) family.</text>
</comment>
<sequence>MGLMAVLMLPLLLLGISGLLFIYQEASRLWSKSAVQNKVVVITDAISGLGKECARVFHAGGARLVLCGKNWEGLESLYATLTSVADPSKTFTPKLVLLDLSDISCVQDVAKEVLDCYGCVDILINNASVKVKGPAHKISLELDKKIMDANYFGPITLTKVLLPNMISRRTGQIVLVNNIQAKFGIPFRTAYAASKHAVMGFFDCLRAEVEEYDVVVSTVSPTFIRSYRASPEQRNWETSICKFFCRKLAYGVHPVEVAEEVMRTVRRKKQEVFMANPVPKAAVFIRTFFPEFFFAVVACGVKEKLNVPEEG</sequence>
<organism>
    <name type="scientific">Mus musculus</name>
    <name type="common">Mouse</name>
    <dbReference type="NCBI Taxonomy" id="10090"/>
    <lineage>
        <taxon>Eukaryota</taxon>
        <taxon>Metazoa</taxon>
        <taxon>Chordata</taxon>
        <taxon>Craniata</taxon>
        <taxon>Vertebrata</taxon>
        <taxon>Euteleostomi</taxon>
        <taxon>Mammalia</taxon>
        <taxon>Eutheria</taxon>
        <taxon>Euarchontoglires</taxon>
        <taxon>Glires</taxon>
        <taxon>Rodentia</taxon>
        <taxon>Myomorpha</taxon>
        <taxon>Muroidea</taxon>
        <taxon>Muridae</taxon>
        <taxon>Murinae</taxon>
        <taxon>Mus</taxon>
        <taxon>Mus</taxon>
    </lineage>
</organism>
<reference key="1">
    <citation type="journal article" date="2009" name="PLoS Biol.">
        <title>Lineage-specific biology revealed by a finished genome assembly of the mouse.</title>
        <authorList>
            <person name="Church D.M."/>
            <person name="Goodstadt L."/>
            <person name="Hillier L.W."/>
            <person name="Zody M.C."/>
            <person name="Goldstein S."/>
            <person name="She X."/>
            <person name="Bult C.J."/>
            <person name="Agarwala R."/>
            <person name="Cherry J.L."/>
            <person name="DiCuccio M."/>
            <person name="Hlavina W."/>
            <person name="Kapustin Y."/>
            <person name="Meric P."/>
            <person name="Maglott D."/>
            <person name="Birtle Z."/>
            <person name="Marques A.C."/>
            <person name="Graves T."/>
            <person name="Zhou S."/>
            <person name="Teague B."/>
            <person name="Potamousis K."/>
            <person name="Churas C."/>
            <person name="Place M."/>
            <person name="Herschleb J."/>
            <person name="Runnheim R."/>
            <person name="Forrest D."/>
            <person name="Amos-Landgraf J."/>
            <person name="Schwartz D.C."/>
            <person name="Cheng Z."/>
            <person name="Lindblad-Toh K."/>
            <person name="Eichler E.E."/>
            <person name="Ponting C.P."/>
        </authorList>
    </citation>
    <scope>NUCLEOTIDE SEQUENCE [LARGE SCALE GENOMIC DNA]</scope>
    <source>
        <strain>C57BL/6J</strain>
        <tissue>Mammary gland</tissue>
    </source>
</reference>
<reference key="2">
    <citation type="submission" date="1996-09" db="EMBL/GenBank/DDBJ databases">
        <title>The WashU-HHMI Mouse EST Project.</title>
        <authorList>
            <person name="Marra M."/>
            <person name="Hillier L."/>
            <person name="Allen M."/>
            <person name="Bowles M."/>
            <person name="Dietrich N."/>
            <person name="Dubuque T."/>
            <person name="Geisel S."/>
            <person name="Kucaba T."/>
            <person name="Lacy M."/>
            <person name="Le M."/>
            <person name="Martin J."/>
            <person name="Morris M."/>
            <person name="Schellenberg K."/>
            <person name="Steptoe M."/>
            <person name="Tan F."/>
            <person name="Underwood K."/>
            <person name="Moore B."/>
            <person name="Theising B."/>
            <person name="Wylie T."/>
            <person name="Lennon G."/>
            <person name="Soares B."/>
            <person name="Wilson R."/>
            <person name="Waterston R."/>
        </authorList>
    </citation>
    <scope>NUCLEOTIDE SEQUENCE [LARGE SCALE MRNA] OF 1-112</scope>
</reference>
<reference key="3">
    <citation type="journal article" date="2010" name="Cell">
        <title>A tissue-specific atlas of mouse protein phosphorylation and expression.</title>
        <authorList>
            <person name="Huttlin E.L."/>
            <person name="Jedrychowski M.P."/>
            <person name="Elias J.E."/>
            <person name="Goswami T."/>
            <person name="Rad R."/>
            <person name="Beausoleil S.A."/>
            <person name="Villen J."/>
            <person name="Haas W."/>
            <person name="Sowa M.E."/>
            <person name="Gygi S.P."/>
        </authorList>
    </citation>
    <scope>IDENTIFICATION BY MASS SPECTROMETRY [LARGE SCALE ANALYSIS]</scope>
    <source>
        <tissue>Heart</tissue>
    </source>
</reference>
<reference key="4">
    <citation type="journal article" date="2012" name="Biochem. J.">
        <title>SRP-35, a newly identified protein of the skeletal muscle sarcoplasmic reticulum, is a retinol dehydrogenase.</title>
        <authorList>
            <person name="Treves S."/>
            <person name="Thurnheer R."/>
            <person name="Mosca B."/>
            <person name="Vukcevic M."/>
            <person name="Bergamelli L."/>
            <person name="Voltan R."/>
            <person name="Oberhauser V."/>
            <person name="Ronjat M."/>
            <person name="Csernoch L."/>
            <person name="Szentesi P."/>
            <person name="Zorzato F."/>
        </authorList>
    </citation>
    <scope>FUNCTION</scope>
    <scope>CATALYTIC ACTIVITY</scope>
    <scope>SUBCELLULAR LOCATION</scope>
    <scope>TISSUE SPECIFICITY</scope>
    <scope>INDUCTION BY RETINOIC ACID</scope>
    <scope>DOMAIN</scope>
</reference>
<reference key="5">
    <citation type="journal article" date="2012" name="Eur. J. Heart Fail.">
        <title>DHRS7c, a novel cardiomyocyte-expressed gene that is down-regulated by adrenergic stimulation and in heart failure.</title>
        <authorList>
            <person name="Lu B."/>
            <person name="Tigchelaar W."/>
            <person name="Ruifrok W.P."/>
            <person name="van Gilst W.H."/>
            <person name="de Boer R.A."/>
            <person name="Sillje H.H."/>
        </authorList>
    </citation>
    <scope>FUNCTION</scope>
    <scope>SUBCELLULAR LOCATION</scope>
    <scope>TISSUE SPECIFICITY</scope>
</reference>
<reference key="6">
    <citation type="journal article" date="2017" name="Am. J. Physiol.">
        <title>Functional loss of DHRS7C induces intracellular Ca2+ overload and myotube enlargement in C2C12 cells via calpain activation.</title>
        <authorList>
            <person name="Arai S."/>
            <person name="Ikeda M."/>
            <person name="Ide T."/>
            <person name="Matsuo Y."/>
            <person name="Fujino T."/>
            <person name="Hirano K."/>
            <person name="Sunagawa K."/>
            <person name="Tsutsui H."/>
        </authorList>
    </citation>
    <scope>FUNCTION</scope>
    <scope>SUBCELLULAR LOCATION</scope>
    <scope>TISSUE SPECIFICITY</scope>
    <scope>DEVELOPMENTAL STAGE</scope>
    <scope>MUTAGENESIS OF TYR-191 AND LYS-195</scope>
</reference>
<reference key="7">
    <citation type="journal article" date="2018" name="Sci. Rep.">
        <title>Over-expression of a retinol dehydrogenase (SRP35/DHRS7C) in skeletal muscle activates mTORC2, enhances glucose metabolism and muscle performance.</title>
        <authorList>
            <person name="Ruiz A."/>
            <person name="Dror E."/>
            <person name="Handschin C."/>
            <person name="Furrer R."/>
            <person name="Perez-Schindler J."/>
            <person name="Bachmann C."/>
            <person name="Treves S."/>
            <person name="Zorzato F."/>
        </authorList>
    </citation>
    <scope>FUNCTION</scope>
</reference>
<proteinExistence type="evidence at protein level"/>
<feature type="signal peptide" evidence="3">
    <location>
        <begin position="1"/>
        <end position="18"/>
    </location>
</feature>
<feature type="chain" id="PRO_0000333756" description="Dehydrogenase/reductase SDR family member 7C">
    <location>
        <begin position="19"/>
        <end position="311"/>
    </location>
</feature>
<feature type="active site" description="Proton acceptor" evidence="4">
    <location>
        <position position="191"/>
    </location>
</feature>
<feature type="binding site" evidence="2">
    <location>
        <position position="47"/>
    </location>
    <ligand>
        <name>NAD(+)</name>
        <dbReference type="ChEBI" id="CHEBI:57540"/>
    </ligand>
</feature>
<feature type="binding site" evidence="2">
    <location>
        <position position="49"/>
    </location>
    <ligand>
        <name>NAD(+)</name>
        <dbReference type="ChEBI" id="CHEBI:57540"/>
    </ligand>
</feature>
<feature type="binding site" evidence="2">
    <location>
        <position position="191"/>
    </location>
    <ligand>
        <name>NAD(+)</name>
        <dbReference type="ChEBI" id="CHEBI:57540"/>
    </ligand>
</feature>
<feature type="binding site" evidence="2">
    <location>
        <position position="195"/>
    </location>
    <ligand>
        <name>NAD(+)</name>
        <dbReference type="ChEBI" id="CHEBI:57540"/>
    </ligand>
</feature>
<feature type="binding site" evidence="2">
    <location>
        <position position="226"/>
    </location>
    <ligand>
        <name>NAD(+)</name>
        <dbReference type="ChEBI" id="CHEBI:57540"/>
    </ligand>
</feature>
<evidence type="ECO:0000250" key="1">
    <source>
        <dbReference type="UniProtKB" id="A6NNS2"/>
    </source>
</evidence>
<evidence type="ECO:0000250" key="2">
    <source>
        <dbReference type="UniProtKB" id="Q99714"/>
    </source>
</evidence>
<evidence type="ECO:0000255" key="3"/>
<evidence type="ECO:0000255" key="4">
    <source>
        <dbReference type="PROSITE-ProRule" id="PRU10001"/>
    </source>
</evidence>
<evidence type="ECO:0000269" key="5">
    <source>
    </source>
</evidence>
<evidence type="ECO:0000269" key="6">
    <source>
    </source>
</evidence>
<evidence type="ECO:0000269" key="7">
    <source>
    </source>
</evidence>
<evidence type="ECO:0000269" key="8">
    <source>
    </source>
</evidence>
<evidence type="ECO:0000303" key="9">
    <source>
    </source>
</evidence>
<evidence type="ECO:0000303" key="10">
    <source>
    </source>
</evidence>
<evidence type="ECO:0000305" key="11"/>
<evidence type="ECO:0000305" key="12">
    <source>
    </source>
</evidence>
<evidence type="ECO:0000305" key="13">
    <source>
    </source>
</evidence>
<evidence type="ECO:0000305" key="14">
    <source>
    </source>
</evidence>
<evidence type="ECO:0000312" key="15">
    <source>
        <dbReference type="MGI" id="MGI:1915710"/>
    </source>
</evidence>
<protein>
    <recommendedName>
        <fullName evidence="10">Dehydrogenase/reductase SDR family member 7C</fullName>
        <ecNumber evidence="5">1.1.1.105</ecNumber>
    </recommendedName>
    <alternativeName>
        <fullName evidence="9">Sarcoplasmic reticulum protein of 35 kDa</fullName>
        <shortName evidence="9">Protein SRP-35</shortName>
    </alternativeName>
    <alternativeName>
        <fullName evidence="1">Short-chain dehydrogenase/reductase family 32C member 2</fullName>
        <shortName evidence="1">Protein SDR32C2</shortName>
    </alternativeName>
</protein>
<gene>
    <name evidence="15" type="primary">Dhrs7c</name>
    <name evidence="1" type="synonym">Sdr32c2</name>
    <name evidence="9" type="synonym">Srp-35</name>
</gene>
<dbReference type="EC" id="1.1.1.105" evidence="5"/>
<dbReference type="EMBL" id="AL646097">
    <property type="status" value="NOT_ANNOTATED_CDS"/>
    <property type="molecule type" value="Genomic_DNA"/>
</dbReference>
<dbReference type="EMBL" id="AA063835">
    <property type="status" value="NOT_ANNOTATED_CDS"/>
    <property type="molecule type" value="mRNA"/>
</dbReference>
<dbReference type="CCDS" id="CCDS48822.1"/>
<dbReference type="RefSeq" id="NP_001013031.2">
    <property type="nucleotide sequence ID" value="NM_001013013.2"/>
</dbReference>
<dbReference type="SMR" id="Q8CHS7"/>
<dbReference type="FunCoup" id="Q8CHS7">
    <property type="interactions" value="61"/>
</dbReference>
<dbReference type="STRING" id="10090.ENSMUSP00000130924"/>
<dbReference type="iPTMnet" id="Q8CHS7"/>
<dbReference type="PhosphoSitePlus" id="Q8CHS7"/>
<dbReference type="jPOST" id="Q8CHS7"/>
<dbReference type="PaxDb" id="10090-ENSMUSP00000130924"/>
<dbReference type="ProteomicsDB" id="279581"/>
<dbReference type="Antibodypedia" id="6297">
    <property type="antibodies" value="98 antibodies from 15 providers"/>
</dbReference>
<dbReference type="DNASU" id="68460"/>
<dbReference type="Ensembl" id="ENSMUST00000168612.8">
    <property type="protein sequence ID" value="ENSMUSP00000130924.2"/>
    <property type="gene ID" value="ENSMUSG00000033044.13"/>
</dbReference>
<dbReference type="GeneID" id="68460"/>
<dbReference type="KEGG" id="mmu:68460"/>
<dbReference type="UCSC" id="uc011xwp.1">
    <property type="organism name" value="mouse"/>
</dbReference>
<dbReference type="AGR" id="MGI:1915710"/>
<dbReference type="CTD" id="201140"/>
<dbReference type="MGI" id="MGI:1915710">
    <property type="gene designation" value="Dhrs7c"/>
</dbReference>
<dbReference type="VEuPathDB" id="HostDB:ENSMUSG00000033044"/>
<dbReference type="eggNOG" id="KOG1205">
    <property type="taxonomic scope" value="Eukaryota"/>
</dbReference>
<dbReference type="GeneTree" id="ENSGT00940000157100"/>
<dbReference type="HOGENOM" id="CLU_010194_2_1_1"/>
<dbReference type="InParanoid" id="Q8CHS7"/>
<dbReference type="OMA" id="NIMDVNY"/>
<dbReference type="OrthoDB" id="5307821at2759"/>
<dbReference type="PhylomeDB" id="Q8CHS7"/>
<dbReference type="TreeFam" id="TF313474"/>
<dbReference type="BioGRID-ORCS" id="68460">
    <property type="hits" value="2 hits in 79 CRISPR screens"/>
</dbReference>
<dbReference type="ChiTaRS" id="Dhrs7c">
    <property type="organism name" value="mouse"/>
</dbReference>
<dbReference type="PRO" id="PR:Q8CHS7"/>
<dbReference type="Proteomes" id="UP000000589">
    <property type="component" value="Chromosome 11"/>
</dbReference>
<dbReference type="RNAct" id="Q8CHS7">
    <property type="molecule type" value="protein"/>
</dbReference>
<dbReference type="Bgee" id="ENSMUSG00000033044">
    <property type="expression patterns" value="Expressed in temporalis muscle and 68 other cell types or tissues"/>
</dbReference>
<dbReference type="GO" id="GO:0014801">
    <property type="term" value="C:longitudinal sarcoplasmic reticulum"/>
    <property type="evidence" value="ECO:0000314"/>
    <property type="project" value="UniProtKB"/>
</dbReference>
<dbReference type="GO" id="GO:0033017">
    <property type="term" value="C:sarcoplasmic reticulum membrane"/>
    <property type="evidence" value="ECO:0000314"/>
    <property type="project" value="UniProtKB"/>
</dbReference>
<dbReference type="GO" id="GO:0004745">
    <property type="term" value="F:all-trans-retinol dehydrogenase (NAD+) activity"/>
    <property type="evidence" value="ECO:0000314"/>
    <property type="project" value="UniProtKB"/>
</dbReference>
<dbReference type="GO" id="GO:0046323">
    <property type="term" value="P:D-glucose import"/>
    <property type="evidence" value="ECO:0000314"/>
    <property type="project" value="UniProtKB"/>
</dbReference>
<dbReference type="GO" id="GO:0006874">
    <property type="term" value="P:intracellular calcium ion homeostasis"/>
    <property type="evidence" value="ECO:0000314"/>
    <property type="project" value="UniProtKB"/>
</dbReference>
<dbReference type="GO" id="GO:0010880">
    <property type="term" value="P:regulation of release of sequestered calcium ion into cytosol by sarcoplasmic reticulum"/>
    <property type="evidence" value="ECO:0000314"/>
    <property type="project" value="UniProtKB"/>
</dbReference>
<dbReference type="CDD" id="cd05332">
    <property type="entry name" value="11beta-HSD1_like_SDR_c"/>
    <property type="match status" value="1"/>
</dbReference>
<dbReference type="FunFam" id="3.40.50.720:FF:000122">
    <property type="entry name" value="Dehydrogenase/reductase SDR family member 7B"/>
    <property type="match status" value="1"/>
</dbReference>
<dbReference type="Gene3D" id="3.40.50.720">
    <property type="entry name" value="NAD(P)-binding Rossmann-like Domain"/>
    <property type="match status" value="1"/>
</dbReference>
<dbReference type="InterPro" id="IPR036291">
    <property type="entry name" value="NAD(P)-bd_dom_sf"/>
</dbReference>
<dbReference type="InterPro" id="IPR020904">
    <property type="entry name" value="Sc_DH/Rdtase_CS"/>
</dbReference>
<dbReference type="InterPro" id="IPR002347">
    <property type="entry name" value="SDR_fam"/>
</dbReference>
<dbReference type="InterPro" id="IPR052148">
    <property type="entry name" value="SDR_family_member_7C"/>
</dbReference>
<dbReference type="PANTHER" id="PTHR44668">
    <property type="match status" value="1"/>
</dbReference>
<dbReference type="PANTHER" id="PTHR44668:SF2">
    <property type="entry name" value="DEHYDROGENASE_REDUCTASE SDR FAMILY MEMBER 7C"/>
    <property type="match status" value="1"/>
</dbReference>
<dbReference type="Pfam" id="PF00106">
    <property type="entry name" value="adh_short"/>
    <property type="match status" value="1"/>
</dbReference>
<dbReference type="PRINTS" id="PR00081">
    <property type="entry name" value="GDHRDH"/>
</dbReference>
<dbReference type="PRINTS" id="PR00080">
    <property type="entry name" value="SDRFAMILY"/>
</dbReference>
<dbReference type="SUPFAM" id="SSF51735">
    <property type="entry name" value="NAD(P)-binding Rossmann-fold domains"/>
    <property type="match status" value="1"/>
</dbReference>
<dbReference type="PROSITE" id="PS00061">
    <property type="entry name" value="ADH_SHORT"/>
    <property type="match status" value="1"/>
</dbReference>
<keyword id="KW-0472">Membrane</keyword>
<keyword id="KW-0520">NAD</keyword>
<keyword id="KW-0521">NADP</keyword>
<keyword id="KW-0560">Oxidoreductase</keyword>
<keyword id="KW-1185">Reference proteome</keyword>
<keyword id="KW-0703">Sarcoplasmic reticulum</keyword>
<keyword id="KW-0732">Signal</keyword>
<name>DRS7C_MOUSE</name>
<accession>Q8CHS7</accession>
<accession>B1ATJ2</accession>